<evidence type="ECO:0000255" key="1">
    <source>
        <dbReference type="HAMAP-Rule" id="MF_01428"/>
    </source>
</evidence>
<gene>
    <name evidence="1" type="primary">gluQ</name>
    <name type="ordered locus">VP2502</name>
</gene>
<accession>Q87LV6</accession>
<protein>
    <recommendedName>
        <fullName evidence="1">Glutamyl-Q tRNA(Asp) synthetase</fullName>
        <shortName evidence="1">Glu-Q-RSs</shortName>
        <ecNumber evidence="1">6.1.1.-</ecNumber>
    </recommendedName>
</protein>
<keyword id="KW-0030">Aminoacyl-tRNA synthetase</keyword>
<keyword id="KW-0067">ATP-binding</keyword>
<keyword id="KW-0436">Ligase</keyword>
<keyword id="KW-0479">Metal-binding</keyword>
<keyword id="KW-0547">Nucleotide-binding</keyword>
<keyword id="KW-0862">Zinc</keyword>
<name>GLUQ_VIBPA</name>
<proteinExistence type="inferred from homology"/>
<sequence>MARYVGRFAPSPSGPLHFGSLIAALGSYFQAKANNGIWLVRIEDLDPPREMPGASQLILEALKAYQLHWDGEVVYQSERHGLYQAQIDAWLDNGDAYYCQCTRKQIKEHGGFYPGTCRDKNLKEGAIRLKMTKPVARFLDQKHGMIEIPEQLVNEDFIIKRRDGLFAYNLAVVLDDIDQGVTEVVRGADLIEPTGRQISLYQILGQPEVSYLHLPLAMDDNGNKLSKQNHATAIDIENPKPALLHAMTFLGFDVPEEIKAASMNEILSWGCENWRLEQLPSEIEITPRFSNGTV</sequence>
<feature type="chain" id="PRO_0000208332" description="Glutamyl-Q tRNA(Asp) synthetase">
    <location>
        <begin position="1"/>
        <end position="294"/>
    </location>
</feature>
<feature type="short sequence motif" description="'HIGH' region">
    <location>
        <begin position="10"/>
        <end position="20"/>
    </location>
</feature>
<feature type="short sequence motif" description="'KMSKS' region">
    <location>
        <begin position="224"/>
        <end position="228"/>
    </location>
</feature>
<feature type="binding site" evidence="1">
    <location>
        <begin position="7"/>
        <end position="11"/>
    </location>
    <ligand>
        <name>L-glutamate</name>
        <dbReference type="ChEBI" id="CHEBI:29985"/>
    </ligand>
</feature>
<feature type="binding site" evidence="1">
    <location>
        <position position="43"/>
    </location>
    <ligand>
        <name>L-glutamate</name>
        <dbReference type="ChEBI" id="CHEBI:29985"/>
    </ligand>
</feature>
<feature type="binding site" evidence="1">
    <location>
        <position position="99"/>
    </location>
    <ligand>
        <name>Zn(2+)</name>
        <dbReference type="ChEBI" id="CHEBI:29105"/>
    </ligand>
</feature>
<feature type="binding site" evidence="1">
    <location>
        <position position="101"/>
    </location>
    <ligand>
        <name>Zn(2+)</name>
        <dbReference type="ChEBI" id="CHEBI:29105"/>
    </ligand>
</feature>
<feature type="binding site" evidence="1">
    <location>
        <position position="113"/>
    </location>
    <ligand>
        <name>Zn(2+)</name>
        <dbReference type="ChEBI" id="CHEBI:29105"/>
    </ligand>
</feature>
<feature type="binding site" evidence="1">
    <location>
        <position position="117"/>
    </location>
    <ligand>
        <name>Zn(2+)</name>
        <dbReference type="ChEBI" id="CHEBI:29105"/>
    </ligand>
</feature>
<feature type="binding site" evidence="1">
    <location>
        <position position="168"/>
    </location>
    <ligand>
        <name>L-glutamate</name>
        <dbReference type="ChEBI" id="CHEBI:29985"/>
    </ligand>
</feature>
<feature type="binding site" evidence="1">
    <location>
        <position position="186"/>
    </location>
    <ligand>
        <name>L-glutamate</name>
        <dbReference type="ChEBI" id="CHEBI:29985"/>
    </ligand>
</feature>
<feature type="binding site" evidence="1">
    <location>
        <position position="227"/>
    </location>
    <ligand>
        <name>ATP</name>
        <dbReference type="ChEBI" id="CHEBI:30616"/>
    </ligand>
</feature>
<organism>
    <name type="scientific">Vibrio parahaemolyticus serotype O3:K6 (strain RIMD 2210633)</name>
    <dbReference type="NCBI Taxonomy" id="223926"/>
    <lineage>
        <taxon>Bacteria</taxon>
        <taxon>Pseudomonadati</taxon>
        <taxon>Pseudomonadota</taxon>
        <taxon>Gammaproteobacteria</taxon>
        <taxon>Vibrionales</taxon>
        <taxon>Vibrionaceae</taxon>
        <taxon>Vibrio</taxon>
    </lineage>
</organism>
<reference key="1">
    <citation type="journal article" date="2003" name="Lancet">
        <title>Genome sequence of Vibrio parahaemolyticus: a pathogenic mechanism distinct from that of V. cholerae.</title>
        <authorList>
            <person name="Makino K."/>
            <person name="Oshima K."/>
            <person name="Kurokawa K."/>
            <person name="Yokoyama K."/>
            <person name="Uda T."/>
            <person name="Tagomori K."/>
            <person name="Iijima Y."/>
            <person name="Najima M."/>
            <person name="Nakano M."/>
            <person name="Yamashita A."/>
            <person name="Kubota Y."/>
            <person name="Kimura S."/>
            <person name="Yasunaga T."/>
            <person name="Honda T."/>
            <person name="Shinagawa H."/>
            <person name="Hattori M."/>
            <person name="Iida T."/>
        </authorList>
    </citation>
    <scope>NUCLEOTIDE SEQUENCE [LARGE SCALE GENOMIC DNA]</scope>
    <source>
        <strain>RIMD 2210633</strain>
    </source>
</reference>
<dbReference type="EC" id="6.1.1.-" evidence="1"/>
<dbReference type="EMBL" id="BA000031">
    <property type="protein sequence ID" value="BAC60765.1"/>
    <property type="molecule type" value="Genomic_DNA"/>
</dbReference>
<dbReference type="RefSeq" id="NP_798881.1">
    <property type="nucleotide sequence ID" value="NC_004603.1"/>
</dbReference>
<dbReference type="SMR" id="Q87LV6"/>
<dbReference type="GeneID" id="1190017"/>
<dbReference type="KEGG" id="vpa:VP2502"/>
<dbReference type="PATRIC" id="fig|223926.6.peg.2402"/>
<dbReference type="eggNOG" id="COG0008">
    <property type="taxonomic scope" value="Bacteria"/>
</dbReference>
<dbReference type="HOGENOM" id="CLU_015768_0_1_6"/>
<dbReference type="Proteomes" id="UP000002493">
    <property type="component" value="Chromosome 1"/>
</dbReference>
<dbReference type="GO" id="GO:0005829">
    <property type="term" value="C:cytosol"/>
    <property type="evidence" value="ECO:0007669"/>
    <property type="project" value="TreeGrafter"/>
</dbReference>
<dbReference type="GO" id="GO:0005524">
    <property type="term" value="F:ATP binding"/>
    <property type="evidence" value="ECO:0007669"/>
    <property type="project" value="UniProtKB-KW"/>
</dbReference>
<dbReference type="GO" id="GO:0004818">
    <property type="term" value="F:glutamate-tRNA ligase activity"/>
    <property type="evidence" value="ECO:0007669"/>
    <property type="project" value="TreeGrafter"/>
</dbReference>
<dbReference type="GO" id="GO:0008270">
    <property type="term" value="F:zinc ion binding"/>
    <property type="evidence" value="ECO:0007669"/>
    <property type="project" value="UniProtKB-UniRule"/>
</dbReference>
<dbReference type="GO" id="GO:0006424">
    <property type="term" value="P:glutamyl-tRNA aminoacylation"/>
    <property type="evidence" value="ECO:0007669"/>
    <property type="project" value="InterPro"/>
</dbReference>
<dbReference type="GO" id="GO:0006400">
    <property type="term" value="P:tRNA modification"/>
    <property type="evidence" value="ECO:0007669"/>
    <property type="project" value="InterPro"/>
</dbReference>
<dbReference type="FunFam" id="3.40.50.620:FF:000093">
    <property type="entry name" value="Glutamyl-Q tRNA(Asp) synthetase"/>
    <property type="match status" value="1"/>
</dbReference>
<dbReference type="Gene3D" id="3.40.50.620">
    <property type="entry name" value="HUPs"/>
    <property type="match status" value="1"/>
</dbReference>
<dbReference type="HAMAP" id="MF_01428">
    <property type="entry name" value="Glu_Q_tRNA_synth"/>
    <property type="match status" value="1"/>
</dbReference>
<dbReference type="InterPro" id="IPR022380">
    <property type="entry name" value="Glu-Q_tRNA(Asp)_Synthase"/>
</dbReference>
<dbReference type="InterPro" id="IPR000924">
    <property type="entry name" value="Glu/Gln-tRNA-synth"/>
</dbReference>
<dbReference type="InterPro" id="IPR020058">
    <property type="entry name" value="Glu/Gln-tRNA-synth_Ib_cat-dom"/>
</dbReference>
<dbReference type="InterPro" id="IPR049940">
    <property type="entry name" value="GluQ/Sye"/>
</dbReference>
<dbReference type="InterPro" id="IPR014729">
    <property type="entry name" value="Rossmann-like_a/b/a_fold"/>
</dbReference>
<dbReference type="NCBIfam" id="NF004314">
    <property type="entry name" value="PRK05710.1-3"/>
    <property type="match status" value="1"/>
</dbReference>
<dbReference type="NCBIfam" id="TIGR03838">
    <property type="entry name" value="queuosine_YadB"/>
    <property type="match status" value="1"/>
</dbReference>
<dbReference type="PANTHER" id="PTHR43311">
    <property type="entry name" value="GLUTAMATE--TRNA LIGASE"/>
    <property type="match status" value="1"/>
</dbReference>
<dbReference type="PANTHER" id="PTHR43311:SF1">
    <property type="entry name" value="GLUTAMYL-Q TRNA(ASP) SYNTHETASE"/>
    <property type="match status" value="1"/>
</dbReference>
<dbReference type="Pfam" id="PF00749">
    <property type="entry name" value="tRNA-synt_1c"/>
    <property type="match status" value="2"/>
</dbReference>
<dbReference type="PRINTS" id="PR00987">
    <property type="entry name" value="TRNASYNTHGLU"/>
</dbReference>
<dbReference type="SUPFAM" id="SSF52374">
    <property type="entry name" value="Nucleotidylyl transferase"/>
    <property type="match status" value="1"/>
</dbReference>
<comment type="function">
    <text evidence="1">Catalyzes the tRNA-independent activation of glutamate in presence of ATP and the subsequent transfer of glutamate onto a tRNA(Asp). Glutamate is transferred on the 2-amino-5-(4,5-dihydroxy-2-cyclopenten-1-yl) moiety of the queuosine in the wobble position of the QUC anticodon.</text>
</comment>
<comment type="cofactor">
    <cofactor evidence="1">
        <name>Zn(2+)</name>
        <dbReference type="ChEBI" id="CHEBI:29105"/>
    </cofactor>
    <text evidence="1">Binds 1 zinc ion per subunit.</text>
</comment>
<comment type="similarity">
    <text evidence="1">Belongs to the class-I aminoacyl-tRNA synthetase family. GluQ subfamily.</text>
</comment>